<evidence type="ECO:0000255" key="1">
    <source>
        <dbReference type="HAMAP-Rule" id="MF_01343"/>
    </source>
</evidence>
<evidence type="ECO:0000305" key="2"/>
<accession>A7HNS0</accession>
<dbReference type="EMBL" id="CP000771">
    <property type="protein sequence ID" value="ABS61553.1"/>
    <property type="molecule type" value="Genomic_DNA"/>
</dbReference>
<dbReference type="RefSeq" id="WP_011994844.1">
    <property type="nucleotide sequence ID" value="NC_009718.1"/>
</dbReference>
<dbReference type="SMR" id="A7HNS0"/>
<dbReference type="STRING" id="381764.Fnod_1718"/>
<dbReference type="KEGG" id="fno:Fnod_1718"/>
<dbReference type="eggNOG" id="COG0184">
    <property type="taxonomic scope" value="Bacteria"/>
</dbReference>
<dbReference type="HOGENOM" id="CLU_148518_0_0_0"/>
<dbReference type="OrthoDB" id="9799262at2"/>
<dbReference type="Proteomes" id="UP000002415">
    <property type="component" value="Chromosome"/>
</dbReference>
<dbReference type="GO" id="GO:0022627">
    <property type="term" value="C:cytosolic small ribosomal subunit"/>
    <property type="evidence" value="ECO:0007669"/>
    <property type="project" value="TreeGrafter"/>
</dbReference>
<dbReference type="GO" id="GO:0019843">
    <property type="term" value="F:rRNA binding"/>
    <property type="evidence" value="ECO:0007669"/>
    <property type="project" value="UniProtKB-UniRule"/>
</dbReference>
<dbReference type="GO" id="GO:0003735">
    <property type="term" value="F:structural constituent of ribosome"/>
    <property type="evidence" value="ECO:0007669"/>
    <property type="project" value="InterPro"/>
</dbReference>
<dbReference type="GO" id="GO:0006412">
    <property type="term" value="P:translation"/>
    <property type="evidence" value="ECO:0007669"/>
    <property type="project" value="UniProtKB-UniRule"/>
</dbReference>
<dbReference type="CDD" id="cd00353">
    <property type="entry name" value="Ribosomal_S15p_S13e"/>
    <property type="match status" value="1"/>
</dbReference>
<dbReference type="FunFam" id="1.10.287.10:FF:000002">
    <property type="entry name" value="30S ribosomal protein S15"/>
    <property type="match status" value="1"/>
</dbReference>
<dbReference type="Gene3D" id="6.10.250.3130">
    <property type="match status" value="1"/>
</dbReference>
<dbReference type="Gene3D" id="1.10.287.10">
    <property type="entry name" value="S15/NS1, RNA-binding"/>
    <property type="match status" value="1"/>
</dbReference>
<dbReference type="HAMAP" id="MF_01343_B">
    <property type="entry name" value="Ribosomal_uS15_B"/>
    <property type="match status" value="1"/>
</dbReference>
<dbReference type="InterPro" id="IPR000589">
    <property type="entry name" value="Ribosomal_uS15"/>
</dbReference>
<dbReference type="InterPro" id="IPR005290">
    <property type="entry name" value="Ribosomal_uS15_bac-type"/>
</dbReference>
<dbReference type="InterPro" id="IPR009068">
    <property type="entry name" value="uS15_NS1_RNA-bd_sf"/>
</dbReference>
<dbReference type="NCBIfam" id="TIGR00952">
    <property type="entry name" value="S15_bact"/>
    <property type="match status" value="1"/>
</dbReference>
<dbReference type="PANTHER" id="PTHR23321">
    <property type="entry name" value="RIBOSOMAL PROTEIN S15, BACTERIAL AND ORGANELLAR"/>
    <property type="match status" value="1"/>
</dbReference>
<dbReference type="PANTHER" id="PTHR23321:SF26">
    <property type="entry name" value="SMALL RIBOSOMAL SUBUNIT PROTEIN US15M"/>
    <property type="match status" value="1"/>
</dbReference>
<dbReference type="Pfam" id="PF00312">
    <property type="entry name" value="Ribosomal_S15"/>
    <property type="match status" value="1"/>
</dbReference>
<dbReference type="SMART" id="SM01387">
    <property type="entry name" value="Ribosomal_S15"/>
    <property type="match status" value="1"/>
</dbReference>
<dbReference type="SUPFAM" id="SSF47060">
    <property type="entry name" value="S15/NS1 RNA-binding domain"/>
    <property type="match status" value="1"/>
</dbReference>
<dbReference type="PROSITE" id="PS00362">
    <property type="entry name" value="RIBOSOMAL_S15"/>
    <property type="match status" value="1"/>
</dbReference>
<proteinExistence type="inferred from homology"/>
<sequence length="84" mass="10055">MNKDDIIKEFQIHDTDTGSTAVQIALLTARIRHLTEHLKNHPKDFHSRRGLMKMVGRRRKMLKYLMKKDPELYKQLLEKLSLRK</sequence>
<keyword id="KW-1185">Reference proteome</keyword>
<keyword id="KW-0687">Ribonucleoprotein</keyword>
<keyword id="KW-0689">Ribosomal protein</keyword>
<keyword id="KW-0694">RNA-binding</keyword>
<keyword id="KW-0699">rRNA-binding</keyword>
<name>RS15_FERNB</name>
<feature type="chain" id="PRO_0000354199" description="Small ribosomal subunit protein uS15">
    <location>
        <begin position="1"/>
        <end position="84"/>
    </location>
</feature>
<gene>
    <name evidence="1" type="primary">rpsO</name>
    <name type="ordered locus">Fnod_1718</name>
</gene>
<comment type="function">
    <text evidence="1">One of the primary rRNA binding proteins, it binds directly to 16S rRNA where it helps nucleate assembly of the platform of the 30S subunit by binding and bridging several RNA helices of the 16S rRNA.</text>
</comment>
<comment type="function">
    <text evidence="1">Forms an intersubunit bridge (bridge B4) with the 23S rRNA of the 50S subunit in the ribosome.</text>
</comment>
<comment type="subunit">
    <text evidence="1">Part of the 30S ribosomal subunit. Forms a bridge to the 50S subunit in the 70S ribosome, contacting the 23S rRNA.</text>
</comment>
<comment type="similarity">
    <text evidence="1">Belongs to the universal ribosomal protein uS15 family.</text>
</comment>
<organism>
    <name type="scientific">Fervidobacterium nodosum (strain ATCC 35602 / DSM 5306 / Rt17-B1)</name>
    <dbReference type="NCBI Taxonomy" id="381764"/>
    <lineage>
        <taxon>Bacteria</taxon>
        <taxon>Thermotogati</taxon>
        <taxon>Thermotogota</taxon>
        <taxon>Thermotogae</taxon>
        <taxon>Thermotogales</taxon>
        <taxon>Fervidobacteriaceae</taxon>
        <taxon>Fervidobacterium</taxon>
    </lineage>
</organism>
<reference key="1">
    <citation type="submission" date="2007-07" db="EMBL/GenBank/DDBJ databases">
        <title>Complete sequence of Fervidobacterium nodosum Rt17-B1.</title>
        <authorList>
            <consortium name="US DOE Joint Genome Institute"/>
            <person name="Copeland A."/>
            <person name="Lucas S."/>
            <person name="Lapidus A."/>
            <person name="Barry K."/>
            <person name="Glavina del Rio T."/>
            <person name="Dalin E."/>
            <person name="Tice H."/>
            <person name="Pitluck S."/>
            <person name="Saunders E."/>
            <person name="Brettin T."/>
            <person name="Bruce D."/>
            <person name="Detter J.C."/>
            <person name="Han C."/>
            <person name="Schmutz J."/>
            <person name="Larimer F."/>
            <person name="Land M."/>
            <person name="Hauser L."/>
            <person name="Kyrpides N."/>
            <person name="Mikhailova N."/>
            <person name="Nelson K."/>
            <person name="Gogarten J.P."/>
            <person name="Noll K."/>
            <person name="Richardson P."/>
        </authorList>
    </citation>
    <scope>NUCLEOTIDE SEQUENCE [LARGE SCALE GENOMIC DNA]</scope>
    <source>
        <strain>ATCC 35602 / DSM 5306 / Rt17-B1</strain>
    </source>
</reference>
<protein>
    <recommendedName>
        <fullName evidence="1">Small ribosomal subunit protein uS15</fullName>
    </recommendedName>
    <alternativeName>
        <fullName evidence="2">30S ribosomal protein S15</fullName>
    </alternativeName>
</protein>